<organism>
    <name type="scientific">Streptomyces griseus subsp. griseus (strain JCM 4626 / CBS 651.72 / NBRC 13350 / KCC S-0626 / ISP 5235)</name>
    <dbReference type="NCBI Taxonomy" id="455632"/>
    <lineage>
        <taxon>Bacteria</taxon>
        <taxon>Bacillati</taxon>
        <taxon>Actinomycetota</taxon>
        <taxon>Actinomycetes</taxon>
        <taxon>Kitasatosporales</taxon>
        <taxon>Streptomycetaceae</taxon>
        <taxon>Streptomyces</taxon>
    </lineage>
</organism>
<gene>
    <name evidence="1" type="primary">msrA</name>
    <name type="ordered locus">SGR_2583</name>
</gene>
<keyword id="KW-0560">Oxidoreductase</keyword>
<reference key="1">
    <citation type="journal article" date="2008" name="J. Bacteriol.">
        <title>Genome sequence of the streptomycin-producing microorganism Streptomyces griseus IFO 13350.</title>
        <authorList>
            <person name="Ohnishi Y."/>
            <person name="Ishikawa J."/>
            <person name="Hara H."/>
            <person name="Suzuki H."/>
            <person name="Ikenoya M."/>
            <person name="Ikeda H."/>
            <person name="Yamashita A."/>
            <person name="Hattori M."/>
            <person name="Horinouchi S."/>
        </authorList>
    </citation>
    <scope>NUCLEOTIDE SEQUENCE [LARGE SCALE GENOMIC DNA]</scope>
    <source>
        <strain>JCM 4626 / CBS 651.72 / NBRC 13350 / KCC S-0626 / ISP 5235</strain>
    </source>
</reference>
<accession>B1W2P8</accession>
<comment type="function">
    <text evidence="1">Has an important function as a repair enzyme for proteins that have been inactivated by oxidation. Catalyzes the reversible oxidation-reduction of methionine sulfoxide in proteins to methionine.</text>
</comment>
<comment type="catalytic activity">
    <reaction evidence="1">
        <text>L-methionyl-[protein] + [thioredoxin]-disulfide + H2O = L-methionyl-(S)-S-oxide-[protein] + [thioredoxin]-dithiol</text>
        <dbReference type="Rhea" id="RHEA:14217"/>
        <dbReference type="Rhea" id="RHEA-COMP:10698"/>
        <dbReference type="Rhea" id="RHEA-COMP:10700"/>
        <dbReference type="Rhea" id="RHEA-COMP:12313"/>
        <dbReference type="Rhea" id="RHEA-COMP:12315"/>
        <dbReference type="ChEBI" id="CHEBI:15377"/>
        <dbReference type="ChEBI" id="CHEBI:16044"/>
        <dbReference type="ChEBI" id="CHEBI:29950"/>
        <dbReference type="ChEBI" id="CHEBI:44120"/>
        <dbReference type="ChEBI" id="CHEBI:50058"/>
        <dbReference type="EC" id="1.8.4.11"/>
    </reaction>
</comment>
<comment type="catalytic activity">
    <reaction evidence="1">
        <text>[thioredoxin]-disulfide + L-methionine + H2O = L-methionine (S)-S-oxide + [thioredoxin]-dithiol</text>
        <dbReference type="Rhea" id="RHEA:19993"/>
        <dbReference type="Rhea" id="RHEA-COMP:10698"/>
        <dbReference type="Rhea" id="RHEA-COMP:10700"/>
        <dbReference type="ChEBI" id="CHEBI:15377"/>
        <dbReference type="ChEBI" id="CHEBI:29950"/>
        <dbReference type="ChEBI" id="CHEBI:50058"/>
        <dbReference type="ChEBI" id="CHEBI:57844"/>
        <dbReference type="ChEBI" id="CHEBI:58772"/>
        <dbReference type="EC" id="1.8.4.11"/>
    </reaction>
</comment>
<comment type="similarity">
    <text evidence="1">Belongs to the MsrA Met sulfoxide reductase family.</text>
</comment>
<evidence type="ECO:0000255" key="1">
    <source>
        <dbReference type="HAMAP-Rule" id="MF_01401"/>
    </source>
</evidence>
<name>MSRA_STRGG</name>
<dbReference type="EC" id="1.8.4.11" evidence="1"/>
<dbReference type="EMBL" id="AP009493">
    <property type="protein sequence ID" value="BAG19412.1"/>
    <property type="molecule type" value="Genomic_DNA"/>
</dbReference>
<dbReference type="RefSeq" id="WP_003966714.1">
    <property type="nucleotide sequence ID" value="NC_010572.1"/>
</dbReference>
<dbReference type="SMR" id="B1W2P8"/>
<dbReference type="KEGG" id="sgr:SGR_2583"/>
<dbReference type="eggNOG" id="COG0225">
    <property type="taxonomic scope" value="Bacteria"/>
</dbReference>
<dbReference type="HOGENOM" id="CLU_031040_10_3_11"/>
<dbReference type="Proteomes" id="UP000001685">
    <property type="component" value="Chromosome"/>
</dbReference>
<dbReference type="GO" id="GO:0005737">
    <property type="term" value="C:cytoplasm"/>
    <property type="evidence" value="ECO:0007669"/>
    <property type="project" value="TreeGrafter"/>
</dbReference>
<dbReference type="GO" id="GO:0036456">
    <property type="term" value="F:L-methionine-(S)-S-oxide reductase activity"/>
    <property type="evidence" value="ECO:0007669"/>
    <property type="project" value="TreeGrafter"/>
</dbReference>
<dbReference type="GO" id="GO:0008113">
    <property type="term" value="F:peptide-methionine (S)-S-oxide reductase activity"/>
    <property type="evidence" value="ECO:0007669"/>
    <property type="project" value="UniProtKB-UniRule"/>
</dbReference>
<dbReference type="GO" id="GO:0034599">
    <property type="term" value="P:cellular response to oxidative stress"/>
    <property type="evidence" value="ECO:0007669"/>
    <property type="project" value="TreeGrafter"/>
</dbReference>
<dbReference type="GO" id="GO:0036211">
    <property type="term" value="P:protein modification process"/>
    <property type="evidence" value="ECO:0007669"/>
    <property type="project" value="UniProtKB-UniRule"/>
</dbReference>
<dbReference type="FunFam" id="3.30.1060.10:FF:000001">
    <property type="entry name" value="Peptide methionine sulfoxide reductase MsrA"/>
    <property type="match status" value="1"/>
</dbReference>
<dbReference type="Gene3D" id="3.30.1060.10">
    <property type="entry name" value="Peptide methionine sulphoxide reductase MsrA"/>
    <property type="match status" value="1"/>
</dbReference>
<dbReference type="HAMAP" id="MF_01401">
    <property type="entry name" value="MsrA"/>
    <property type="match status" value="1"/>
</dbReference>
<dbReference type="InterPro" id="IPR002569">
    <property type="entry name" value="Met_Sox_Rdtase_MsrA_dom"/>
</dbReference>
<dbReference type="InterPro" id="IPR036509">
    <property type="entry name" value="Met_Sox_Rdtase_MsrA_sf"/>
</dbReference>
<dbReference type="InterPro" id="IPR050162">
    <property type="entry name" value="MsrA_MetSO_reductase"/>
</dbReference>
<dbReference type="NCBIfam" id="TIGR00401">
    <property type="entry name" value="msrA"/>
    <property type="match status" value="1"/>
</dbReference>
<dbReference type="PANTHER" id="PTHR42799">
    <property type="entry name" value="MITOCHONDRIAL PEPTIDE METHIONINE SULFOXIDE REDUCTASE"/>
    <property type="match status" value="1"/>
</dbReference>
<dbReference type="PANTHER" id="PTHR42799:SF2">
    <property type="entry name" value="MITOCHONDRIAL PEPTIDE METHIONINE SULFOXIDE REDUCTASE"/>
    <property type="match status" value="1"/>
</dbReference>
<dbReference type="Pfam" id="PF01625">
    <property type="entry name" value="PMSR"/>
    <property type="match status" value="1"/>
</dbReference>
<dbReference type="SUPFAM" id="SSF55068">
    <property type="entry name" value="Peptide methionine sulfoxide reductase"/>
    <property type="match status" value="1"/>
</dbReference>
<protein>
    <recommendedName>
        <fullName evidence="1">Peptide methionine sulfoxide reductase MsrA</fullName>
        <shortName evidence="1">Protein-methionine-S-oxide reductase</shortName>
        <ecNumber evidence="1">1.8.4.11</ecNumber>
    </recommendedName>
    <alternativeName>
        <fullName evidence="1">Peptide-methionine (S)-S-oxide reductase</fullName>
        <shortName evidence="1">Peptide Met(O) reductase</shortName>
    </alternativeName>
</protein>
<feature type="chain" id="PRO_1000145440" description="Peptide methionine sulfoxide reductase MsrA">
    <location>
        <begin position="1"/>
        <end position="222"/>
    </location>
</feature>
<feature type="active site" evidence="1">
    <location>
        <position position="55"/>
    </location>
</feature>
<sequence>MFLNHRTPVLPTPEQALRGRPVPEFTVPSRHTVLGNPLVGPYPDGLEVADFALGCFWGAERKFWQTEGVWTTLVGYQGGYTENPSYEEACSGLTGHTEAVRVVFDPAVVSYEELLKLFWESHNPTQGFRQGNDVGTQYRSAIYTHSPAQAAAADASRAAYQKVLTASGHQEITTEILPAEGRPFWPAEAYHQQYLDKNPGGYCGIGGTGVSCPIGVAPADGR</sequence>
<proteinExistence type="inferred from homology"/>